<proteinExistence type="inferred from homology"/>
<feature type="chain" id="PRO_0000096832" description="Protein NifX">
    <location>
        <begin position="1"/>
        <end position="159"/>
    </location>
</feature>
<reference key="1">
    <citation type="journal article" date="1989" name="Mol. Gen. Genet.">
        <title>DNA sequence and genetic analysis of the Rhodobacter capsulatus nifENX gene region: homology between NifX and NifB suggests involvement of NifX in processing of the iron-molybdenum cofactor.</title>
        <authorList>
            <person name="Moreno-Vivian C."/>
            <person name="Schmehl M."/>
            <person name="Masepohl B."/>
            <person name="Arnold W."/>
            <person name="Klipp W."/>
        </authorList>
    </citation>
    <scope>NUCLEOTIDE SEQUENCE [GENOMIC DNA]</scope>
</reference>
<comment type="function">
    <text>May play a role in the processing of the iron-molybdenum cofactor.</text>
</comment>
<comment type="similarity">
    <text evidence="1">Belongs to the NifX/NifY family.</text>
</comment>
<name>NIFX_RHOCA</name>
<keyword id="KW-0535">Nitrogen fixation</keyword>
<sequence length="159" mass="17456">MSRTLRLVEPAGPAPGEKPLRVAIASNDLENLDAHFGSARQIAVYEVWKTGARFVEVHQFSSATDQKGRHDELEDRIGPKLEALSGCTLVFALAVGGPSAARMVRAGMHPIKRKEPEPISAVIEQVQVMLNGTPPPFLRKVLGTWEKPDFTADFEEEEV</sequence>
<dbReference type="EMBL" id="X17433">
    <property type="protein sequence ID" value="CAA35474.1"/>
    <property type="molecule type" value="Genomic_DNA"/>
</dbReference>
<dbReference type="PIR" id="JE0031">
    <property type="entry name" value="JE0031"/>
</dbReference>
<dbReference type="SMR" id="P19078"/>
<dbReference type="OMA" id="MQIGGPA"/>
<dbReference type="GO" id="GO:0051540">
    <property type="term" value="F:metal cluster binding"/>
    <property type="evidence" value="ECO:0007669"/>
    <property type="project" value="InterPro"/>
</dbReference>
<dbReference type="GO" id="GO:0009399">
    <property type="term" value="P:nitrogen fixation"/>
    <property type="evidence" value="ECO:0007669"/>
    <property type="project" value="UniProtKB-KW"/>
</dbReference>
<dbReference type="CDD" id="cd00853">
    <property type="entry name" value="NifX"/>
    <property type="match status" value="1"/>
</dbReference>
<dbReference type="Gene3D" id="3.30.420.130">
    <property type="entry name" value="Dinitrogenase iron-molybdenum cofactor biosynthesis domain"/>
    <property type="match status" value="1"/>
</dbReference>
<dbReference type="InterPro" id="IPR003731">
    <property type="entry name" value="Di-Nase_FeMo-co_biosynth"/>
</dbReference>
<dbReference type="InterPro" id="IPR036105">
    <property type="entry name" value="DiNase_FeMo-co_biosyn_sf"/>
</dbReference>
<dbReference type="InterPro" id="IPR013480">
    <property type="entry name" value="NifX"/>
</dbReference>
<dbReference type="InterPro" id="IPR034169">
    <property type="entry name" value="NifX-like"/>
</dbReference>
<dbReference type="InterPro" id="IPR051840">
    <property type="entry name" value="NifX/NifY_domain"/>
</dbReference>
<dbReference type="NCBIfam" id="TIGR02663">
    <property type="entry name" value="nifX"/>
    <property type="match status" value="1"/>
</dbReference>
<dbReference type="PANTHER" id="PTHR33937:SF1">
    <property type="entry name" value="IRON-MOLIBDENUM COFACTOR PROCESSING PROTEIN"/>
    <property type="match status" value="1"/>
</dbReference>
<dbReference type="PANTHER" id="PTHR33937">
    <property type="entry name" value="IRON-MOLYBDENUM PROTEIN-RELATED-RELATED"/>
    <property type="match status" value="1"/>
</dbReference>
<dbReference type="Pfam" id="PF02579">
    <property type="entry name" value="Nitro_FeMo-Co"/>
    <property type="match status" value="1"/>
</dbReference>
<dbReference type="SUPFAM" id="SSF53146">
    <property type="entry name" value="Nitrogenase accessory factor-like"/>
    <property type="match status" value="1"/>
</dbReference>
<evidence type="ECO:0000305" key="1"/>
<organism>
    <name type="scientific">Rhodobacter capsulatus</name>
    <name type="common">Rhodopseudomonas capsulata</name>
    <dbReference type="NCBI Taxonomy" id="1061"/>
    <lineage>
        <taxon>Bacteria</taxon>
        <taxon>Pseudomonadati</taxon>
        <taxon>Pseudomonadota</taxon>
        <taxon>Alphaproteobacteria</taxon>
        <taxon>Rhodobacterales</taxon>
        <taxon>Rhodobacter group</taxon>
        <taxon>Rhodobacter</taxon>
    </lineage>
</organism>
<accession>P19078</accession>
<protein>
    <recommendedName>
        <fullName>Protein NifX</fullName>
    </recommendedName>
</protein>
<gene>
    <name type="primary">nifX</name>
</gene>